<feature type="chain" id="PRO_0000204790" description="Transgelin-3">
    <location>
        <begin position="1"/>
        <end position="199"/>
    </location>
</feature>
<feature type="domain" description="Calponin-homology (CH)" evidence="1">
    <location>
        <begin position="24"/>
        <end position="136"/>
    </location>
</feature>
<feature type="repeat" description="Calponin-like">
    <location>
        <begin position="174"/>
        <end position="199"/>
    </location>
</feature>
<feature type="region of interest" description="Disordered" evidence="2">
    <location>
        <begin position="178"/>
        <end position="199"/>
    </location>
</feature>
<feature type="compositionally biased region" description="Polar residues" evidence="2">
    <location>
        <begin position="178"/>
        <end position="188"/>
    </location>
</feature>
<feature type="modified residue" description="Phosphoserine" evidence="4">
    <location>
        <position position="163"/>
    </location>
</feature>
<reference key="1">
    <citation type="journal article" date="1994" name="Brain Res. Mol. Brain Res.">
        <title>The identification of NP25: a novel protein that is differentially expressed by neuronal subpopulations.</title>
        <authorList>
            <person name="Ren W.-Z."/>
            <person name="Ng G.Y.K."/>
            <person name="Wang R.-X."/>
            <person name="Wu P.H."/>
            <person name="O'Dowd B.F."/>
            <person name="Osmond D.H."/>
            <person name="George S.R."/>
            <person name="Liew C.-C."/>
        </authorList>
    </citation>
    <scope>NUCLEOTIDE SEQUENCE [MRNA]</scope>
    <source>
        <strain>Sprague-Dawley</strain>
        <tissue>Brain</tissue>
    </source>
</reference>
<reference key="2">
    <citation type="submission" date="2001-12" db="EMBL/GenBank/DDBJ databases">
        <authorList>
            <person name="Wilce P.A."/>
            <person name="Jaquet V."/>
            <person name="Bursle J.K."/>
            <person name="Fan L."/>
            <person name="Depaz I.M."/>
            <person name="van der Brug M.P."/>
            <person name="de las Heras R."/>
        </authorList>
    </citation>
    <scope>NUCLEOTIDE SEQUENCE [MRNA]</scope>
    <source>
        <strain>Sprague-Dawley</strain>
        <tissue>Brain</tissue>
    </source>
</reference>
<reference key="3">
    <citation type="submission" date="2007-07" db="UniProtKB">
        <authorList>
            <person name="Lubec G."/>
            <person name="Afjehi-Sadat L."/>
            <person name="Chen W.-Q."/>
            <person name="Kang S.U."/>
        </authorList>
    </citation>
    <scope>PROTEIN SEQUENCE OF 30-49; 65-79; 89-98; 128-139 AND 160-168</scope>
    <scope>IDENTIFICATION BY MASS SPECTROMETRY</scope>
    <source>
        <strain>Sprague-Dawley</strain>
        <tissue>Brain</tissue>
        <tissue>Hippocampus</tissue>
        <tissue>Spinal cord</tissue>
    </source>
</reference>
<reference key="4">
    <citation type="journal article" date="2012" name="Nat. Commun.">
        <title>Quantitative maps of protein phosphorylation sites across 14 different rat organs and tissues.</title>
        <authorList>
            <person name="Lundby A."/>
            <person name="Secher A."/>
            <person name="Lage K."/>
            <person name="Nordsborg N.B."/>
            <person name="Dmytriyev A."/>
            <person name="Lundby C."/>
            <person name="Olsen J.V."/>
        </authorList>
    </citation>
    <scope>PHOSPHORYLATION [LARGE SCALE ANALYSIS] AT SER-163</scope>
    <scope>IDENTIFICATION BY MASS SPECTROMETRY [LARGE SCALE ANALYSIS]</scope>
</reference>
<keyword id="KW-0903">Direct protein sequencing</keyword>
<keyword id="KW-0597">Phosphoprotein</keyword>
<keyword id="KW-1185">Reference proteome</keyword>
<protein>
    <recommendedName>
        <fullName>Transgelin-3</fullName>
    </recommendedName>
    <alternativeName>
        <fullName>Neuronal protein 22</fullName>
        <shortName>NP22</shortName>
    </alternativeName>
    <alternativeName>
        <fullName>Neuronal protein NP25</fullName>
    </alternativeName>
</protein>
<evidence type="ECO:0000255" key="1">
    <source>
        <dbReference type="PROSITE-ProRule" id="PRU00044"/>
    </source>
</evidence>
<evidence type="ECO:0000256" key="2">
    <source>
        <dbReference type="SAM" id="MobiDB-lite"/>
    </source>
</evidence>
<evidence type="ECO:0000305" key="3"/>
<evidence type="ECO:0007744" key="4">
    <source>
    </source>
</evidence>
<gene>
    <name type="primary">Tagln3</name>
    <name type="synonym">Np25</name>
</gene>
<comment type="tissue specificity">
    <text>Abundant and ubiquitous expression in neurons.</text>
</comment>
<comment type="similarity">
    <text evidence="3">Belongs to the calponin family.</text>
</comment>
<comment type="sequence caution" evidence="3">
    <conflict type="frameshift">
        <sequence resource="EMBL-CDS" id="AAC42095"/>
    </conflict>
</comment>
<accession>P37805</accession>
<accession>Q09025</accession>
<accession>Q8VHH3</accession>
<sequence length="199" mass="22501">MANRGPSYGLSREVQEKIEQKYDADLENKLVDWIILQCAEDIEHPPPGRTHFQKWLMDGTVLCKLINSLYPPGQEPIPKISESKMAFKQMEQISQFLKAAEVYGVRTTDIFQTVDLWEGKDMAAVQRTLMALGSVAVTKDDGCYRGEPSWFHRKAQQNRRGFSEEQLRQGQNVIGLQMGSNKGASQAGMTGYGMPRQIM</sequence>
<organism>
    <name type="scientific">Rattus norvegicus</name>
    <name type="common">Rat</name>
    <dbReference type="NCBI Taxonomy" id="10116"/>
    <lineage>
        <taxon>Eukaryota</taxon>
        <taxon>Metazoa</taxon>
        <taxon>Chordata</taxon>
        <taxon>Craniata</taxon>
        <taxon>Vertebrata</taxon>
        <taxon>Euteleostomi</taxon>
        <taxon>Mammalia</taxon>
        <taxon>Eutheria</taxon>
        <taxon>Euarchontoglires</taxon>
        <taxon>Glires</taxon>
        <taxon>Rodentia</taxon>
        <taxon>Myomorpha</taxon>
        <taxon>Muroidea</taxon>
        <taxon>Muridae</taxon>
        <taxon>Murinae</taxon>
        <taxon>Rattus</taxon>
    </lineage>
</organism>
<name>TAGL3_RAT</name>
<dbReference type="EMBL" id="M84725">
    <property type="protein sequence ID" value="AAC42095.1"/>
    <property type="status" value="ALT_FRAME"/>
    <property type="molecule type" value="mRNA"/>
</dbReference>
<dbReference type="EMBL" id="AF459788">
    <property type="protein sequence ID" value="AAL66341.1"/>
    <property type="molecule type" value="mRNA"/>
</dbReference>
<dbReference type="PIR" id="I52644">
    <property type="entry name" value="I52644"/>
</dbReference>
<dbReference type="RefSeq" id="NP_001030313.1">
    <property type="nucleotide sequence ID" value="NM_001035236.1"/>
</dbReference>
<dbReference type="RefSeq" id="NP_113864.2">
    <property type="nucleotide sequence ID" value="NM_031676.2"/>
</dbReference>
<dbReference type="RefSeq" id="XP_008766898.1">
    <property type="nucleotide sequence ID" value="XM_008768676.1"/>
</dbReference>
<dbReference type="SMR" id="P37805"/>
<dbReference type="BioGRID" id="248896">
    <property type="interactions" value="1"/>
</dbReference>
<dbReference type="FunCoup" id="P37805">
    <property type="interactions" value="563"/>
</dbReference>
<dbReference type="STRING" id="10116.ENSRNOP00000002942"/>
<dbReference type="iPTMnet" id="P37805"/>
<dbReference type="PhosphoSitePlus" id="P37805"/>
<dbReference type="SwissPalm" id="P37805"/>
<dbReference type="jPOST" id="P37805"/>
<dbReference type="PaxDb" id="10116-ENSRNOP00000002942"/>
<dbReference type="Ensembl" id="ENSRNOT00000090230.2">
    <property type="protein sequence ID" value="ENSRNOP00000072985.1"/>
    <property type="gene ID" value="ENSRNOG00000064186.1"/>
</dbReference>
<dbReference type="GeneID" id="63837"/>
<dbReference type="KEGG" id="rno:63837"/>
<dbReference type="UCSC" id="RGD:69301">
    <property type="organism name" value="rat"/>
</dbReference>
<dbReference type="AGR" id="RGD:69301"/>
<dbReference type="CTD" id="29114"/>
<dbReference type="RGD" id="69301">
    <property type="gene designation" value="Tagln3"/>
</dbReference>
<dbReference type="eggNOG" id="KOG2046">
    <property type="taxonomic scope" value="Eukaryota"/>
</dbReference>
<dbReference type="GeneTree" id="ENSGT00940000159385"/>
<dbReference type="HOGENOM" id="CLU_055232_1_0_1"/>
<dbReference type="InParanoid" id="P37805"/>
<dbReference type="OrthoDB" id="21595at2759"/>
<dbReference type="PhylomeDB" id="P37805"/>
<dbReference type="TreeFam" id="TF313921"/>
<dbReference type="PRO" id="PR:P37805"/>
<dbReference type="Proteomes" id="UP000002494">
    <property type="component" value="Chromosome 11"/>
</dbReference>
<dbReference type="Bgee" id="ENSRNOG00000002151">
    <property type="expression patterns" value="Expressed in cerebellum and 4 other cell types or tissues"/>
</dbReference>
<dbReference type="ExpressionAtlas" id="P37805">
    <property type="expression patterns" value="baseline"/>
</dbReference>
<dbReference type="GO" id="GO:0015629">
    <property type="term" value="C:actin cytoskeleton"/>
    <property type="evidence" value="ECO:0000318"/>
    <property type="project" value="GO_Central"/>
</dbReference>
<dbReference type="GO" id="GO:0005634">
    <property type="term" value="C:nucleus"/>
    <property type="evidence" value="ECO:0000266"/>
    <property type="project" value="RGD"/>
</dbReference>
<dbReference type="GO" id="GO:0045202">
    <property type="term" value="C:synapse"/>
    <property type="evidence" value="ECO:0000266"/>
    <property type="project" value="RGD"/>
</dbReference>
<dbReference type="GO" id="GO:0051015">
    <property type="term" value="F:actin filament binding"/>
    <property type="evidence" value="ECO:0000318"/>
    <property type="project" value="GO_Central"/>
</dbReference>
<dbReference type="GO" id="GO:0007015">
    <property type="term" value="P:actin filament organization"/>
    <property type="evidence" value="ECO:0000318"/>
    <property type="project" value="GO_Central"/>
</dbReference>
<dbReference type="GO" id="GO:0000122">
    <property type="term" value="P:negative regulation of transcription by RNA polymerase II"/>
    <property type="evidence" value="ECO:0000266"/>
    <property type="project" value="RGD"/>
</dbReference>
<dbReference type="CDD" id="cd21281">
    <property type="entry name" value="CH_TAGLN3"/>
    <property type="match status" value="1"/>
</dbReference>
<dbReference type="FunFam" id="1.10.418.10:FF:000039">
    <property type="entry name" value="Transgelin"/>
    <property type="match status" value="1"/>
</dbReference>
<dbReference type="Gene3D" id="1.10.418.10">
    <property type="entry name" value="Calponin-like domain"/>
    <property type="match status" value="1"/>
</dbReference>
<dbReference type="InterPro" id="IPR050606">
    <property type="entry name" value="Calponin-like"/>
</dbReference>
<dbReference type="InterPro" id="IPR000557">
    <property type="entry name" value="Calponin_repeat"/>
</dbReference>
<dbReference type="InterPro" id="IPR001715">
    <property type="entry name" value="CH_dom"/>
</dbReference>
<dbReference type="InterPro" id="IPR036872">
    <property type="entry name" value="CH_dom_sf"/>
</dbReference>
<dbReference type="InterPro" id="IPR003096">
    <property type="entry name" value="SM22_calponin"/>
</dbReference>
<dbReference type="PANTHER" id="PTHR47385">
    <property type="entry name" value="CALPONIN"/>
    <property type="match status" value="1"/>
</dbReference>
<dbReference type="PANTHER" id="PTHR47385:SF10">
    <property type="entry name" value="TRANSGELIN-3"/>
    <property type="match status" value="1"/>
</dbReference>
<dbReference type="Pfam" id="PF00402">
    <property type="entry name" value="Calponin"/>
    <property type="match status" value="1"/>
</dbReference>
<dbReference type="Pfam" id="PF00307">
    <property type="entry name" value="CH"/>
    <property type="match status" value="1"/>
</dbReference>
<dbReference type="PRINTS" id="PR00888">
    <property type="entry name" value="SM22CALPONIN"/>
</dbReference>
<dbReference type="PRINTS" id="PR00890">
    <property type="entry name" value="TRANSGELIN"/>
</dbReference>
<dbReference type="SMART" id="SM00033">
    <property type="entry name" value="CH"/>
    <property type="match status" value="1"/>
</dbReference>
<dbReference type="SUPFAM" id="SSF47576">
    <property type="entry name" value="Calponin-homology domain, CH-domain"/>
    <property type="match status" value="1"/>
</dbReference>
<dbReference type="PROSITE" id="PS01052">
    <property type="entry name" value="CALPONIN_1"/>
    <property type="match status" value="1"/>
</dbReference>
<dbReference type="PROSITE" id="PS51122">
    <property type="entry name" value="CALPONIN_2"/>
    <property type="match status" value="1"/>
</dbReference>
<dbReference type="PROSITE" id="PS50021">
    <property type="entry name" value="CH"/>
    <property type="match status" value="1"/>
</dbReference>
<proteinExistence type="evidence at protein level"/>